<reference key="1">
    <citation type="journal article" date="2008" name="BMC Genomics">
        <title>Complete genome of Phenylobacterium zucineum - a novel facultative intracellular bacterium isolated from human erythroleukemia cell line K562.</title>
        <authorList>
            <person name="Luo Y."/>
            <person name="Xu X."/>
            <person name="Ding Z."/>
            <person name="Liu Z."/>
            <person name="Zhang B."/>
            <person name="Yan Z."/>
            <person name="Sun J."/>
            <person name="Hu S."/>
            <person name="Hu X."/>
        </authorList>
    </citation>
    <scope>NUCLEOTIDE SEQUENCE [LARGE SCALE GENOMIC DNA]</scope>
    <source>
        <strain>HLK1</strain>
    </source>
</reference>
<accession>B4R9C1</accession>
<comment type="function">
    <text evidence="1">IF-3 binds to the 30S ribosomal subunit and shifts the equilibrium between 70S ribosomes and their 50S and 30S subunits in favor of the free subunits, thus enhancing the availability of 30S subunits on which protein synthesis initiation begins.</text>
</comment>
<comment type="subunit">
    <text evidence="1">Monomer.</text>
</comment>
<comment type="subcellular location">
    <subcellularLocation>
        <location evidence="1">Cytoplasm</location>
    </subcellularLocation>
</comment>
<comment type="similarity">
    <text evidence="1">Belongs to the IF-3 family.</text>
</comment>
<name>IF3_PHEZH</name>
<dbReference type="EMBL" id="CP000747">
    <property type="protein sequence ID" value="ACG79381.1"/>
    <property type="molecule type" value="Genomic_DNA"/>
</dbReference>
<dbReference type="RefSeq" id="WP_012523519.1">
    <property type="nucleotide sequence ID" value="NC_011144.1"/>
</dbReference>
<dbReference type="SMR" id="B4R9C1"/>
<dbReference type="STRING" id="450851.PHZ_c2972"/>
<dbReference type="KEGG" id="pzu:PHZ_c2972"/>
<dbReference type="eggNOG" id="COG0290">
    <property type="taxonomic scope" value="Bacteria"/>
</dbReference>
<dbReference type="HOGENOM" id="CLU_054919_3_2_5"/>
<dbReference type="OrthoDB" id="9806014at2"/>
<dbReference type="Proteomes" id="UP000001868">
    <property type="component" value="Chromosome"/>
</dbReference>
<dbReference type="GO" id="GO:0005829">
    <property type="term" value="C:cytosol"/>
    <property type="evidence" value="ECO:0007669"/>
    <property type="project" value="TreeGrafter"/>
</dbReference>
<dbReference type="GO" id="GO:0016020">
    <property type="term" value="C:membrane"/>
    <property type="evidence" value="ECO:0007669"/>
    <property type="project" value="TreeGrafter"/>
</dbReference>
<dbReference type="GO" id="GO:0043022">
    <property type="term" value="F:ribosome binding"/>
    <property type="evidence" value="ECO:0007669"/>
    <property type="project" value="TreeGrafter"/>
</dbReference>
<dbReference type="GO" id="GO:0003743">
    <property type="term" value="F:translation initiation factor activity"/>
    <property type="evidence" value="ECO:0007669"/>
    <property type="project" value="UniProtKB-UniRule"/>
</dbReference>
<dbReference type="GO" id="GO:0032790">
    <property type="term" value="P:ribosome disassembly"/>
    <property type="evidence" value="ECO:0007669"/>
    <property type="project" value="TreeGrafter"/>
</dbReference>
<dbReference type="FunFam" id="3.10.20.80:FF:000001">
    <property type="entry name" value="Translation initiation factor IF-3"/>
    <property type="match status" value="1"/>
</dbReference>
<dbReference type="FunFam" id="3.30.110.10:FF:000001">
    <property type="entry name" value="Translation initiation factor IF-3"/>
    <property type="match status" value="1"/>
</dbReference>
<dbReference type="Gene3D" id="3.30.110.10">
    <property type="entry name" value="Translation initiation factor 3 (IF-3), C-terminal domain"/>
    <property type="match status" value="1"/>
</dbReference>
<dbReference type="Gene3D" id="3.10.20.80">
    <property type="entry name" value="Translation initiation factor 3 (IF-3), N-terminal domain"/>
    <property type="match status" value="1"/>
</dbReference>
<dbReference type="HAMAP" id="MF_00080">
    <property type="entry name" value="IF_3"/>
    <property type="match status" value="1"/>
</dbReference>
<dbReference type="InterPro" id="IPR036788">
    <property type="entry name" value="T_IF-3_C_sf"/>
</dbReference>
<dbReference type="InterPro" id="IPR036787">
    <property type="entry name" value="T_IF-3_N_sf"/>
</dbReference>
<dbReference type="InterPro" id="IPR019813">
    <property type="entry name" value="Translation_initiation_fac3_CS"/>
</dbReference>
<dbReference type="InterPro" id="IPR001288">
    <property type="entry name" value="Translation_initiation_fac_3"/>
</dbReference>
<dbReference type="InterPro" id="IPR019815">
    <property type="entry name" value="Translation_initiation_fac_3_C"/>
</dbReference>
<dbReference type="InterPro" id="IPR019814">
    <property type="entry name" value="Translation_initiation_fac_3_N"/>
</dbReference>
<dbReference type="NCBIfam" id="TIGR00168">
    <property type="entry name" value="infC"/>
    <property type="match status" value="1"/>
</dbReference>
<dbReference type="PANTHER" id="PTHR10938">
    <property type="entry name" value="TRANSLATION INITIATION FACTOR IF-3"/>
    <property type="match status" value="1"/>
</dbReference>
<dbReference type="PANTHER" id="PTHR10938:SF0">
    <property type="entry name" value="TRANSLATION INITIATION FACTOR IF-3, MITOCHONDRIAL"/>
    <property type="match status" value="1"/>
</dbReference>
<dbReference type="Pfam" id="PF00707">
    <property type="entry name" value="IF3_C"/>
    <property type="match status" value="1"/>
</dbReference>
<dbReference type="Pfam" id="PF05198">
    <property type="entry name" value="IF3_N"/>
    <property type="match status" value="1"/>
</dbReference>
<dbReference type="SUPFAM" id="SSF55200">
    <property type="entry name" value="Translation initiation factor IF3, C-terminal domain"/>
    <property type="match status" value="1"/>
</dbReference>
<dbReference type="SUPFAM" id="SSF54364">
    <property type="entry name" value="Translation initiation factor IF3, N-terminal domain"/>
    <property type="match status" value="1"/>
</dbReference>
<dbReference type="PROSITE" id="PS00938">
    <property type="entry name" value="IF3"/>
    <property type="match status" value="1"/>
</dbReference>
<protein>
    <recommendedName>
        <fullName evidence="1">Translation initiation factor IF-3</fullName>
    </recommendedName>
</protein>
<keyword id="KW-0963">Cytoplasm</keyword>
<keyword id="KW-0396">Initiation factor</keyword>
<keyword id="KW-0648">Protein biosynthesis</keyword>
<keyword id="KW-1185">Reference proteome</keyword>
<sequence>MQAPPVKEGPRMNEDIRVPRVLLIDQHGEKQGVMPTSAAIEAAEEAGLDLVEIVPNADPPVCKILDYGKFKFQEQKKKNEARKKQKVVELKEIKLRPNIDQHDYEVKARSMHRFFEEGDKVKITLRFRGRELAHPELGMKLLQKVKVDFEEVAKVEYEPRMEGRQMIMILAPR</sequence>
<proteinExistence type="inferred from homology"/>
<gene>
    <name evidence="1" type="primary">infC</name>
    <name type="ordered locus">PHZ_c2972</name>
</gene>
<feature type="chain" id="PRO_1000092778" description="Translation initiation factor IF-3">
    <location>
        <begin position="1"/>
        <end position="173"/>
    </location>
</feature>
<organism>
    <name type="scientific">Phenylobacterium zucineum (strain HLK1)</name>
    <dbReference type="NCBI Taxonomy" id="450851"/>
    <lineage>
        <taxon>Bacteria</taxon>
        <taxon>Pseudomonadati</taxon>
        <taxon>Pseudomonadota</taxon>
        <taxon>Alphaproteobacteria</taxon>
        <taxon>Caulobacterales</taxon>
        <taxon>Caulobacteraceae</taxon>
        <taxon>Phenylobacterium</taxon>
    </lineage>
</organism>
<evidence type="ECO:0000255" key="1">
    <source>
        <dbReference type="HAMAP-Rule" id="MF_00080"/>
    </source>
</evidence>